<organism>
    <name type="scientific">Rattus norvegicus</name>
    <name type="common">Rat</name>
    <dbReference type="NCBI Taxonomy" id="10116"/>
    <lineage>
        <taxon>Eukaryota</taxon>
        <taxon>Metazoa</taxon>
        <taxon>Chordata</taxon>
        <taxon>Craniata</taxon>
        <taxon>Vertebrata</taxon>
        <taxon>Euteleostomi</taxon>
        <taxon>Mammalia</taxon>
        <taxon>Eutheria</taxon>
        <taxon>Euarchontoglires</taxon>
        <taxon>Glires</taxon>
        <taxon>Rodentia</taxon>
        <taxon>Myomorpha</taxon>
        <taxon>Muroidea</taxon>
        <taxon>Muridae</taxon>
        <taxon>Murinae</taxon>
        <taxon>Rattus</taxon>
    </lineage>
</organism>
<protein>
    <recommendedName>
        <fullName>Calsequestrin-1</fullName>
    </recommendedName>
    <alternativeName>
        <fullName>Aspartactin</fullName>
    </alternativeName>
    <alternativeName>
        <fullName>Calsequestrin, skeletal muscle isoform</fullName>
    </alternativeName>
    <alternativeName>
        <fullName>Laminin-binding protein</fullName>
    </alternativeName>
</protein>
<comment type="function">
    <text evidence="1 2 3 7">Calsequestrin is a high-capacity, moderate affinity, calcium-binding protein and thus acts as an internal calcium store in muscle (PubMed:8042990). Calcium ions are bound by clusters of acidic residues at the protein surface, often at the interface between subunits. Can bind around 80 Ca(2+) ions. Regulates the release of lumenal Ca(2+) via the calcium release channel RYR1; this plays an important role in triggering muscle contraction (By similarity). Negatively regulates store-operated Ca(2+) entry (SOCE) activity (By similarity).</text>
</comment>
<comment type="subunit">
    <text evidence="2 3">Monomer; increases in response to a depletion of intracellular calcium. Homodimer. Homotetramer and homopolymer. Can form linear homooligomers. Ca(2+) ions promote oligomerization. Interacts (via C-terminal end and preferentially with the monomeric form) with STIM1; this interaction increases in response to a depletion of intracellular calcium, decreases both STIM1 aggregation and clustering, interaction of STIM1 with ORAI1 and store-operated Ca(2+) entry (SOCE) activity. Interacts with ASPH and TRDN.</text>
</comment>
<comment type="subcellular location">
    <subcellularLocation>
        <location evidence="3">Endoplasmic reticulum</location>
    </subcellularLocation>
    <subcellularLocation>
        <location evidence="3">Sarcoplasmic reticulum</location>
    </subcellularLocation>
    <subcellularLocation>
        <location evidence="2">Sarcoplasmic reticulum lumen</location>
    </subcellularLocation>
    <subcellularLocation>
        <location>Sarcoplasmic reticulum membrane</location>
        <topology>Peripheral membrane protein</topology>
        <orientation evidence="2">Lumenal side</orientation>
    </subcellularLocation>
    <subcellularLocation>
        <location evidence="1">Mitochondrion matrix</location>
    </subcellularLocation>
    <text evidence="2 3">This isoform of calsequestrin occurs in the sarcoplasmic reticulum's terminal cisternae luminal spaces of fast skeletal muscle cells. Preferentially forms linear and round aggregates in the endoplasmic reticulum (ER) of resting cells. In a minority of cells, homogeneously detected in the ER lumen. Colocalizes with STIM1 at endoplasmic reticulum in response to a depletion of intracellular calcium.</text>
</comment>
<comment type="tissue specificity">
    <text evidence="6 7">Detected in skeletal muscle and in smooth muscle from vas deferens, aorta and stomach (at protein level).</text>
</comment>
<comment type="PTM">
    <text evidence="2">N-glycosylated.</text>
</comment>
<comment type="similarity">
    <text evidence="8">Belongs to the calsequestrin family.</text>
</comment>
<comment type="sequence caution" evidence="8">
    <conflict type="frameshift">
        <sequence resource="EMBL" id="CA334109"/>
    </conflict>
</comment>
<reference key="1">
    <citation type="journal article" date="2004" name="Nature">
        <title>Genome sequence of the Brown Norway rat yields insights into mammalian evolution.</title>
        <authorList>
            <person name="Gibbs R.A."/>
            <person name="Weinstock G.M."/>
            <person name="Metzker M.L."/>
            <person name="Muzny D.M."/>
            <person name="Sodergren E.J."/>
            <person name="Scherer S."/>
            <person name="Scott G."/>
            <person name="Steffen D."/>
            <person name="Worley K.C."/>
            <person name="Burch P.E."/>
            <person name="Okwuonu G."/>
            <person name="Hines S."/>
            <person name="Lewis L."/>
            <person name="Deramo C."/>
            <person name="Delgado O."/>
            <person name="Dugan-Rocha S."/>
            <person name="Miner G."/>
            <person name="Morgan M."/>
            <person name="Hawes A."/>
            <person name="Gill R."/>
            <person name="Holt R.A."/>
            <person name="Adams M.D."/>
            <person name="Amanatides P.G."/>
            <person name="Baden-Tillson H."/>
            <person name="Barnstead M."/>
            <person name="Chin S."/>
            <person name="Evans C.A."/>
            <person name="Ferriera S."/>
            <person name="Fosler C."/>
            <person name="Glodek A."/>
            <person name="Gu Z."/>
            <person name="Jennings D."/>
            <person name="Kraft C.L."/>
            <person name="Nguyen T."/>
            <person name="Pfannkoch C.M."/>
            <person name="Sitter C."/>
            <person name="Sutton G.G."/>
            <person name="Venter J.C."/>
            <person name="Woodage T."/>
            <person name="Smith D."/>
            <person name="Lee H.-M."/>
            <person name="Gustafson E."/>
            <person name="Cahill P."/>
            <person name="Kana A."/>
            <person name="Doucette-Stamm L."/>
            <person name="Weinstock K."/>
            <person name="Fechtel K."/>
            <person name="Weiss R.B."/>
            <person name="Dunn D.M."/>
            <person name="Green E.D."/>
            <person name="Blakesley R.W."/>
            <person name="Bouffard G.G."/>
            <person name="De Jong P.J."/>
            <person name="Osoegawa K."/>
            <person name="Zhu B."/>
            <person name="Marra M."/>
            <person name="Schein J."/>
            <person name="Bosdet I."/>
            <person name="Fjell C."/>
            <person name="Jones S."/>
            <person name="Krzywinski M."/>
            <person name="Mathewson C."/>
            <person name="Siddiqui A."/>
            <person name="Wye N."/>
            <person name="McPherson J."/>
            <person name="Zhao S."/>
            <person name="Fraser C.M."/>
            <person name="Shetty J."/>
            <person name="Shatsman S."/>
            <person name="Geer K."/>
            <person name="Chen Y."/>
            <person name="Abramzon S."/>
            <person name="Nierman W.C."/>
            <person name="Havlak P.H."/>
            <person name="Chen R."/>
            <person name="Durbin K.J."/>
            <person name="Egan A."/>
            <person name="Ren Y."/>
            <person name="Song X.-Z."/>
            <person name="Li B."/>
            <person name="Liu Y."/>
            <person name="Qin X."/>
            <person name="Cawley S."/>
            <person name="Cooney A.J."/>
            <person name="D'Souza L.M."/>
            <person name="Martin K."/>
            <person name="Wu J.Q."/>
            <person name="Gonzalez-Garay M.L."/>
            <person name="Jackson A.R."/>
            <person name="Kalafus K.J."/>
            <person name="McLeod M.P."/>
            <person name="Milosavljevic A."/>
            <person name="Virk D."/>
            <person name="Volkov A."/>
            <person name="Wheeler D.A."/>
            <person name="Zhang Z."/>
            <person name="Bailey J.A."/>
            <person name="Eichler E.E."/>
            <person name="Tuzun E."/>
            <person name="Birney E."/>
            <person name="Mongin E."/>
            <person name="Ureta-Vidal A."/>
            <person name="Woodwark C."/>
            <person name="Zdobnov E."/>
            <person name="Bork P."/>
            <person name="Suyama M."/>
            <person name="Torrents D."/>
            <person name="Alexandersson M."/>
            <person name="Trask B.J."/>
            <person name="Young J.M."/>
            <person name="Huang H."/>
            <person name="Wang H."/>
            <person name="Xing H."/>
            <person name="Daniels S."/>
            <person name="Gietzen D."/>
            <person name="Schmidt J."/>
            <person name="Stevens K."/>
            <person name="Vitt U."/>
            <person name="Wingrove J."/>
            <person name="Camara F."/>
            <person name="Mar Alba M."/>
            <person name="Abril J.F."/>
            <person name="Guigo R."/>
            <person name="Smit A."/>
            <person name="Dubchak I."/>
            <person name="Rubin E.M."/>
            <person name="Couronne O."/>
            <person name="Poliakov A."/>
            <person name="Huebner N."/>
            <person name="Ganten D."/>
            <person name="Goesele C."/>
            <person name="Hummel O."/>
            <person name="Kreitler T."/>
            <person name="Lee Y.-A."/>
            <person name="Monti J."/>
            <person name="Schulz H."/>
            <person name="Zimdahl H."/>
            <person name="Himmelbauer H."/>
            <person name="Lehrach H."/>
            <person name="Jacob H.J."/>
            <person name="Bromberg S."/>
            <person name="Gullings-Handley J."/>
            <person name="Jensen-Seaman M.I."/>
            <person name="Kwitek A.E."/>
            <person name="Lazar J."/>
            <person name="Pasko D."/>
            <person name="Tonellato P.J."/>
            <person name="Twigger S."/>
            <person name="Ponting C.P."/>
            <person name="Duarte J.M."/>
            <person name="Rice S."/>
            <person name="Goodstadt L."/>
            <person name="Beatson S.A."/>
            <person name="Emes R.D."/>
            <person name="Winter E.E."/>
            <person name="Webber C."/>
            <person name="Brandt P."/>
            <person name="Nyakatura G."/>
            <person name="Adetobi M."/>
            <person name="Chiaromonte F."/>
            <person name="Elnitski L."/>
            <person name="Eswara P."/>
            <person name="Hardison R.C."/>
            <person name="Hou M."/>
            <person name="Kolbe D."/>
            <person name="Makova K."/>
            <person name="Miller W."/>
            <person name="Nekrutenko A."/>
            <person name="Riemer C."/>
            <person name="Schwartz S."/>
            <person name="Taylor J."/>
            <person name="Yang S."/>
            <person name="Zhang Y."/>
            <person name="Lindpaintner K."/>
            <person name="Andrews T.D."/>
            <person name="Caccamo M."/>
            <person name="Clamp M."/>
            <person name="Clarke L."/>
            <person name="Curwen V."/>
            <person name="Durbin R.M."/>
            <person name="Eyras E."/>
            <person name="Searle S.M."/>
            <person name="Cooper G.M."/>
            <person name="Batzoglou S."/>
            <person name="Brudno M."/>
            <person name="Sidow A."/>
            <person name="Stone E.A."/>
            <person name="Payseur B.A."/>
            <person name="Bourque G."/>
            <person name="Lopez-Otin C."/>
            <person name="Puente X.S."/>
            <person name="Chakrabarti K."/>
            <person name="Chatterji S."/>
            <person name="Dewey C."/>
            <person name="Pachter L."/>
            <person name="Bray N."/>
            <person name="Yap V.B."/>
            <person name="Caspi A."/>
            <person name="Tesler G."/>
            <person name="Pevzner P.A."/>
            <person name="Haussler D."/>
            <person name="Roskin K.M."/>
            <person name="Baertsch R."/>
            <person name="Clawson H."/>
            <person name="Furey T.S."/>
            <person name="Hinrichs A.S."/>
            <person name="Karolchik D."/>
            <person name="Kent W.J."/>
            <person name="Rosenbloom K.R."/>
            <person name="Trumbower H."/>
            <person name="Weirauch M."/>
            <person name="Cooper D.N."/>
            <person name="Stenson P.D."/>
            <person name="Ma B."/>
            <person name="Brent M."/>
            <person name="Arumugam M."/>
            <person name="Shteynberg D."/>
            <person name="Copley R.R."/>
            <person name="Taylor M.S."/>
            <person name="Riethman H."/>
            <person name="Mudunuri U."/>
            <person name="Peterson J."/>
            <person name="Guyer M."/>
            <person name="Felsenfeld A."/>
            <person name="Old S."/>
            <person name="Mockrin S."/>
            <person name="Collins F.S."/>
        </authorList>
    </citation>
    <scope>NUCLEOTIDE SEQUENCE [LARGE SCALE GENOMIC DNA]</scope>
    <source>
        <strain>Brown Norway</strain>
    </source>
</reference>
<reference key="2">
    <citation type="journal article" date="2004" name="Genome Res.">
        <title>The status, quality, and expansion of the NIH full-length cDNA project: the Mammalian Gene Collection (MGC).</title>
        <authorList>
            <consortium name="The MGC Project Team"/>
        </authorList>
    </citation>
    <scope>NUCLEOTIDE SEQUENCE [LARGE SCALE MRNA] OF 1-163</scope>
    <source>
        <tissue>Prostate</tissue>
    </source>
</reference>
<reference key="3">
    <citation type="journal article" date="1988" name="J. Cell Biol.">
        <title>Isolation and characterization of a laminin-binding protein from rat and chick muscle.</title>
        <authorList>
            <person name="Hall D.E."/>
            <person name="Frazer K.A."/>
            <person name="Hann B.C."/>
            <person name="Reichardt L.F."/>
        </authorList>
    </citation>
    <scope>PROTEIN SEQUENCE OF 35-54</scope>
    <scope>TISSUE SPECIFICITY</scope>
</reference>
<reference key="4">
    <citation type="journal article" date="1994" name="Biochem. J.">
        <title>Calsequestrin is a component of smooth muscles: the skeletal- and cardiac-muscle isoforms are both present, although in highly variable amounts and ratios.</title>
        <authorList>
            <person name="Volpe P."/>
            <person name="Martini A."/>
            <person name="Furlan S."/>
            <person name="Meldolesi J."/>
        </authorList>
    </citation>
    <scope>PROTEIN SEQUENCE OF 35-54</scope>
    <scope>TISSUE SPECIFICITY</scope>
    <scope>FUNCTION</scope>
    <source>
        <strain>Wistar</strain>
        <tissue>Aorta</tissue>
        <tissue>Stomach</tissue>
        <tissue>Vas deferens</tissue>
    </source>
</reference>
<reference key="5">
    <citation type="journal article" date="2012" name="Nat. Commun.">
        <title>Quantitative maps of protein phosphorylation sites across 14 different rat organs and tissues.</title>
        <authorList>
            <person name="Lundby A."/>
            <person name="Secher A."/>
            <person name="Lage K."/>
            <person name="Nordsborg N.B."/>
            <person name="Dmytriyev A."/>
            <person name="Lundby C."/>
            <person name="Olsen J.V."/>
        </authorList>
    </citation>
    <scope>PHOSPHORYLATION [LARGE SCALE ANALYSIS] AT TYR-43; SER-81; THR-124 AND SER-216</scope>
    <scope>IDENTIFICATION BY MASS SPECTROMETRY [LARGE SCALE ANALYSIS]</scope>
</reference>
<accession>P19633</accession>
<evidence type="ECO:0000250" key="1">
    <source>
        <dbReference type="UniProtKB" id="O09165"/>
    </source>
</evidence>
<evidence type="ECO:0000250" key="2">
    <source>
        <dbReference type="UniProtKB" id="P07221"/>
    </source>
</evidence>
<evidence type="ECO:0000250" key="3">
    <source>
        <dbReference type="UniProtKB" id="P31415"/>
    </source>
</evidence>
<evidence type="ECO:0000255" key="4"/>
<evidence type="ECO:0000256" key="5">
    <source>
        <dbReference type="SAM" id="MobiDB-lite"/>
    </source>
</evidence>
<evidence type="ECO:0000269" key="6">
    <source>
    </source>
</evidence>
<evidence type="ECO:0000269" key="7">
    <source>
    </source>
</evidence>
<evidence type="ECO:0000305" key="8"/>
<evidence type="ECO:0007744" key="9">
    <source>
    </source>
</evidence>
<sequence>MRATDRMGARAVSKLRLALLFVLVLGTPRSGVQGEDGLDFPEYDGVDRVINVNAKNYKNVFKKYEVLALLYHEPPEDDKASQRQFEMEELILELAAQVLEDKGVGFGLVDSEKDAAVAKKLGLTEEDSVYVFKGDEVIEYDGEFSADTLVEFLLDVLEDPVELIEGERELQAFENIEDEIKLIGYFKSKDSEHYKAYEDAAEEFHPYIPFFATFDSKVAKKLTLKLNEIDFYEAFMEEPVTIPDKPNSEEEIVSFVEEHRRSTLRKLKPESMYETWEDDLDGIHIVAFAEEADPDGYEFLETLKAVAQDNTENPDLSIIWIDPDDFPLLVPYWEKTFDIDLSAPQIGVVNVTDADSIWMEMDDEEDLPSAEELEDWLEDVLEGEINTEDDDDDDDDDDDDDDDDDD</sequence>
<name>CASQ1_RAT</name>
<dbReference type="EMBL" id="AABR03085534">
    <property type="status" value="NOT_ANNOTATED_CDS"/>
    <property type="molecule type" value="Genomic_DNA"/>
</dbReference>
<dbReference type="EMBL" id="AABR03087242">
    <property type="status" value="NOT_ANNOTATED_CDS"/>
    <property type="molecule type" value="Genomic_DNA"/>
</dbReference>
<dbReference type="EMBL" id="CA334109">
    <property type="status" value="NOT_ANNOTATED_CDS"/>
    <property type="molecule type" value="mRNA"/>
</dbReference>
<dbReference type="PIR" id="A31049">
    <property type="entry name" value="A31049"/>
</dbReference>
<dbReference type="RefSeq" id="NP_001153066.1">
    <property type="nucleotide sequence ID" value="NM_001159594.1"/>
</dbReference>
<dbReference type="SMR" id="P19633"/>
<dbReference type="FunCoup" id="P19633">
    <property type="interactions" value="37"/>
</dbReference>
<dbReference type="STRING" id="10116.ENSRNOP00000009344"/>
<dbReference type="GlyCosmos" id="P19633">
    <property type="glycosylation" value="1 site, No reported glycans"/>
</dbReference>
<dbReference type="GlyGen" id="P19633">
    <property type="glycosylation" value="1 site"/>
</dbReference>
<dbReference type="iPTMnet" id="P19633"/>
<dbReference type="PhosphoSitePlus" id="P19633"/>
<dbReference type="PaxDb" id="10116-ENSRNOP00000009344"/>
<dbReference type="Ensembl" id="ENSRNOT00000009344.7">
    <property type="protein sequence ID" value="ENSRNOP00000009344.5"/>
    <property type="gene ID" value="ENSRNOG00000006930.7"/>
</dbReference>
<dbReference type="GeneID" id="686019"/>
<dbReference type="KEGG" id="rno:686019"/>
<dbReference type="UCSC" id="RGD:1586677">
    <property type="organism name" value="rat"/>
</dbReference>
<dbReference type="AGR" id="RGD:1586677"/>
<dbReference type="CTD" id="844"/>
<dbReference type="RGD" id="1586677">
    <property type="gene designation" value="Casq1"/>
</dbReference>
<dbReference type="eggNOG" id="ENOG502QQUJ">
    <property type="taxonomic scope" value="Eukaryota"/>
</dbReference>
<dbReference type="GeneTree" id="ENSGT00390000019377"/>
<dbReference type="HOGENOM" id="CLU_036303_1_0_1"/>
<dbReference type="InParanoid" id="P19633"/>
<dbReference type="OMA" id="WMEMDNE"/>
<dbReference type="OrthoDB" id="10038131at2759"/>
<dbReference type="Reactome" id="R-RNO-2672351">
    <property type="pathway name" value="Stimuli-sensing channels"/>
</dbReference>
<dbReference type="Reactome" id="R-RNO-5578775">
    <property type="pathway name" value="Ion homeostasis"/>
</dbReference>
<dbReference type="PRO" id="PR:P19633"/>
<dbReference type="Proteomes" id="UP000002494">
    <property type="component" value="Chromosome 13"/>
</dbReference>
<dbReference type="Bgee" id="ENSRNOG00000006930">
    <property type="expression patterns" value="Expressed in quadriceps femoris and 19 other cell types or tissues"/>
</dbReference>
<dbReference type="GO" id="GO:0005783">
    <property type="term" value="C:endoplasmic reticulum"/>
    <property type="evidence" value="ECO:0000266"/>
    <property type="project" value="RGD"/>
</dbReference>
<dbReference type="GO" id="GO:0031674">
    <property type="term" value="C:I band"/>
    <property type="evidence" value="ECO:0000314"/>
    <property type="project" value="RGD"/>
</dbReference>
<dbReference type="GO" id="GO:0005759">
    <property type="term" value="C:mitochondrial matrix"/>
    <property type="evidence" value="ECO:0000250"/>
    <property type="project" value="UniProtKB"/>
</dbReference>
<dbReference type="GO" id="GO:0030016">
    <property type="term" value="C:myofibril"/>
    <property type="evidence" value="ECO:0000314"/>
    <property type="project" value="RGD"/>
</dbReference>
<dbReference type="GO" id="GO:0042383">
    <property type="term" value="C:sarcolemma"/>
    <property type="evidence" value="ECO:0000314"/>
    <property type="project" value="RGD"/>
</dbReference>
<dbReference type="GO" id="GO:0016529">
    <property type="term" value="C:sarcoplasmic reticulum"/>
    <property type="evidence" value="ECO:0000314"/>
    <property type="project" value="RGD"/>
</dbReference>
<dbReference type="GO" id="GO:0033018">
    <property type="term" value="C:sarcoplasmic reticulum lumen"/>
    <property type="evidence" value="ECO:0000250"/>
    <property type="project" value="UniProtKB"/>
</dbReference>
<dbReference type="GO" id="GO:0033017">
    <property type="term" value="C:sarcoplasmic reticulum membrane"/>
    <property type="evidence" value="ECO:0007669"/>
    <property type="project" value="UniProtKB-SubCell"/>
</dbReference>
<dbReference type="GO" id="GO:0030315">
    <property type="term" value="C:T-tubule"/>
    <property type="evidence" value="ECO:0000314"/>
    <property type="project" value="RGD"/>
</dbReference>
<dbReference type="GO" id="GO:0014802">
    <property type="term" value="C:terminal cisterna"/>
    <property type="evidence" value="ECO:0000314"/>
    <property type="project" value="RGD"/>
</dbReference>
<dbReference type="GO" id="GO:0014804">
    <property type="term" value="C:terminal cisterna lumen"/>
    <property type="evidence" value="ECO:0000314"/>
    <property type="project" value="RGD"/>
</dbReference>
<dbReference type="GO" id="GO:0030018">
    <property type="term" value="C:Z disc"/>
    <property type="evidence" value="ECO:0000318"/>
    <property type="project" value="GO_Central"/>
</dbReference>
<dbReference type="GO" id="GO:0005509">
    <property type="term" value="F:calcium ion binding"/>
    <property type="evidence" value="ECO:0000314"/>
    <property type="project" value="RGD"/>
</dbReference>
<dbReference type="GO" id="GO:0042802">
    <property type="term" value="F:identical protein binding"/>
    <property type="evidence" value="ECO:0000250"/>
    <property type="project" value="UniProtKB"/>
</dbReference>
<dbReference type="GO" id="GO:0007029">
    <property type="term" value="P:endoplasmic reticulum organization"/>
    <property type="evidence" value="ECO:0000266"/>
    <property type="project" value="RGD"/>
</dbReference>
<dbReference type="GO" id="GO:0051281">
    <property type="term" value="P:positive regulation of release of sequestered calcium ion into cytosol"/>
    <property type="evidence" value="ECO:0000250"/>
    <property type="project" value="UniProtKB"/>
</dbReference>
<dbReference type="GO" id="GO:1901341">
    <property type="term" value="P:positive regulation of store-operated calcium channel activity"/>
    <property type="evidence" value="ECO:0000250"/>
    <property type="project" value="UniProtKB"/>
</dbReference>
<dbReference type="GO" id="GO:0051258">
    <property type="term" value="P:protein polymerization"/>
    <property type="evidence" value="ECO:0000250"/>
    <property type="project" value="UniProtKB"/>
</dbReference>
<dbReference type="GO" id="GO:0010880">
    <property type="term" value="P:regulation of release of sequestered calcium ion into cytosol by sarcoplasmic reticulum"/>
    <property type="evidence" value="ECO:0000266"/>
    <property type="project" value="RGD"/>
</dbReference>
<dbReference type="GO" id="GO:0051282">
    <property type="term" value="P:regulation of sequestering of calcium ion"/>
    <property type="evidence" value="ECO:0000314"/>
    <property type="project" value="RGD"/>
</dbReference>
<dbReference type="GO" id="GO:0014809">
    <property type="term" value="P:regulation of skeletal muscle contraction by regulation of release of sequestered calcium ion"/>
    <property type="evidence" value="ECO:0000250"/>
    <property type="project" value="UniProtKB"/>
</dbReference>
<dbReference type="GO" id="GO:2001256">
    <property type="term" value="P:regulation of store-operated calcium entry"/>
    <property type="evidence" value="ECO:0000250"/>
    <property type="project" value="UniProtKB"/>
</dbReference>
<dbReference type="GO" id="GO:0014894">
    <property type="term" value="P:response to denervation involved in regulation of muscle adaptation"/>
    <property type="evidence" value="ECO:0000270"/>
    <property type="project" value="RGD"/>
</dbReference>
<dbReference type="GO" id="GO:0009408">
    <property type="term" value="P:response to heat"/>
    <property type="evidence" value="ECO:0000266"/>
    <property type="project" value="RGD"/>
</dbReference>
<dbReference type="GO" id="GO:0014870">
    <property type="term" value="P:response to muscle inactivity"/>
    <property type="evidence" value="ECO:0000270"/>
    <property type="project" value="RGD"/>
</dbReference>
<dbReference type="GO" id="GO:0045214">
    <property type="term" value="P:sarcomere organization"/>
    <property type="evidence" value="ECO:0000250"/>
    <property type="project" value="UniProtKB"/>
</dbReference>
<dbReference type="GO" id="GO:0007519">
    <property type="term" value="P:skeletal muscle tissue development"/>
    <property type="evidence" value="ECO:0000270"/>
    <property type="project" value="RGD"/>
</dbReference>
<dbReference type="CDD" id="cd03074">
    <property type="entry name" value="PDI_b'_Calsequestrin_C"/>
    <property type="match status" value="1"/>
</dbReference>
<dbReference type="CDD" id="cd03066">
    <property type="entry name" value="PDI_b_Calsequestrin_middle"/>
    <property type="match status" value="1"/>
</dbReference>
<dbReference type="CDD" id="cd03065">
    <property type="entry name" value="PDI_b_Calsequestrin_N"/>
    <property type="match status" value="1"/>
</dbReference>
<dbReference type="FunFam" id="3.40.30.10:FF:000031">
    <property type="entry name" value="Calsequestrin"/>
    <property type="match status" value="1"/>
</dbReference>
<dbReference type="FunFam" id="3.40.30.10:FF:000033">
    <property type="entry name" value="Calsequestrin"/>
    <property type="match status" value="1"/>
</dbReference>
<dbReference type="FunFam" id="3.40.30.10:FF:000047">
    <property type="entry name" value="Calsequestrin"/>
    <property type="match status" value="1"/>
</dbReference>
<dbReference type="Gene3D" id="3.40.30.10">
    <property type="entry name" value="Glutaredoxin"/>
    <property type="match status" value="3"/>
</dbReference>
<dbReference type="InterPro" id="IPR001393">
    <property type="entry name" value="Calsequestrin"/>
</dbReference>
<dbReference type="InterPro" id="IPR041860">
    <property type="entry name" value="Calsequestrin_C"/>
</dbReference>
<dbReference type="InterPro" id="IPR018233">
    <property type="entry name" value="Calsequestrin_CS"/>
</dbReference>
<dbReference type="InterPro" id="IPR041858">
    <property type="entry name" value="Calsequestrin_middle_dom"/>
</dbReference>
<dbReference type="InterPro" id="IPR041859">
    <property type="entry name" value="Calsequestrin_N"/>
</dbReference>
<dbReference type="InterPro" id="IPR036249">
    <property type="entry name" value="Thioredoxin-like_sf"/>
</dbReference>
<dbReference type="PANTHER" id="PTHR10033">
    <property type="entry name" value="CALSEQUESTRIN"/>
    <property type="match status" value="1"/>
</dbReference>
<dbReference type="PANTHER" id="PTHR10033:SF14">
    <property type="entry name" value="CALSEQUESTRIN-1"/>
    <property type="match status" value="1"/>
</dbReference>
<dbReference type="Pfam" id="PF01216">
    <property type="entry name" value="Calsequestrin"/>
    <property type="match status" value="1"/>
</dbReference>
<dbReference type="PRINTS" id="PR00312">
    <property type="entry name" value="CALSEQUESTRN"/>
</dbReference>
<dbReference type="SUPFAM" id="SSF52833">
    <property type="entry name" value="Thioredoxin-like"/>
    <property type="match status" value="3"/>
</dbReference>
<dbReference type="PROSITE" id="PS00863">
    <property type="entry name" value="CALSEQUESTRIN_1"/>
    <property type="match status" value="1"/>
</dbReference>
<dbReference type="PROSITE" id="PS00864">
    <property type="entry name" value="CALSEQUESTRIN_2"/>
    <property type="match status" value="1"/>
</dbReference>
<keyword id="KW-0106">Calcium</keyword>
<keyword id="KW-0903">Direct protein sequencing</keyword>
<keyword id="KW-0256">Endoplasmic reticulum</keyword>
<keyword id="KW-0325">Glycoprotein</keyword>
<keyword id="KW-0472">Membrane</keyword>
<keyword id="KW-0479">Metal-binding</keyword>
<keyword id="KW-0496">Mitochondrion</keyword>
<keyword id="KW-0514">Muscle protein</keyword>
<keyword id="KW-0597">Phosphoprotein</keyword>
<keyword id="KW-1185">Reference proteome</keyword>
<keyword id="KW-0703">Sarcoplasmic reticulum</keyword>
<keyword id="KW-0732">Signal</keyword>
<proteinExistence type="evidence at protein level"/>
<feature type="signal peptide" evidence="4 6 7">
    <location>
        <begin position="1"/>
        <end position="34"/>
    </location>
</feature>
<feature type="chain" id="PRO_0000144072" description="Calsequestrin-1">
    <location>
        <begin position="35"/>
        <end position="406"/>
    </location>
</feature>
<feature type="region of interest" description="Disordered" evidence="5">
    <location>
        <begin position="382"/>
        <end position="406"/>
    </location>
</feature>
<feature type="modified residue" description="Phosphotyrosine" evidence="9">
    <location>
        <position position="43"/>
    </location>
</feature>
<feature type="modified residue" description="Phosphoserine" evidence="9">
    <location>
        <position position="81"/>
    </location>
</feature>
<feature type="modified residue" description="Phosphothreonine" evidence="9">
    <location>
        <position position="124"/>
    </location>
</feature>
<feature type="modified residue" description="Phosphoserine" evidence="9">
    <location>
        <position position="216"/>
    </location>
</feature>
<feature type="glycosylation site" description="N-linked (GlcNAc...) asparagine" evidence="4">
    <location>
        <position position="350"/>
    </location>
</feature>
<feature type="sequence conflict" description="In Ref. 4; AA sequence." evidence="8" ref="4">
    <original>D</original>
    <variation>E</variation>
    <location>
        <position position="36"/>
    </location>
</feature>
<feature type="sequence conflict" description="In Ref. 4; AA sequence." evidence="8" ref="4">
    <original>NA</original>
    <variation>AD</variation>
    <location>
        <begin position="53"/>
        <end position="54"/>
    </location>
</feature>
<gene>
    <name type="primary">Casq1</name>
</gene>